<sequence>MIFTPFLPPADLSVFQNVKGPQKDPEELVAVSDTAEDPSSGTGLPREPALLRGSWRSRFQRALACFIKCFRGGYRALGI</sequence>
<accession>A0A1B0GTK5</accession>
<organism>
    <name type="scientific">Homo sapiens</name>
    <name type="common">Human</name>
    <dbReference type="NCBI Taxonomy" id="9606"/>
    <lineage>
        <taxon>Eukaryota</taxon>
        <taxon>Metazoa</taxon>
        <taxon>Chordata</taxon>
        <taxon>Craniata</taxon>
        <taxon>Vertebrata</taxon>
        <taxon>Euteleostomi</taxon>
        <taxon>Mammalia</taxon>
        <taxon>Eutheria</taxon>
        <taxon>Euarchontoglires</taxon>
        <taxon>Primates</taxon>
        <taxon>Haplorrhini</taxon>
        <taxon>Catarrhini</taxon>
        <taxon>Hominidae</taxon>
        <taxon>Homo</taxon>
    </lineage>
</organism>
<reference key="1">
    <citation type="journal article" date="2005" name="Nature">
        <title>The DNA sequence of the human X chromosome.</title>
        <authorList>
            <person name="Ross M.T."/>
            <person name="Grafham D.V."/>
            <person name="Coffey A.J."/>
            <person name="Scherer S."/>
            <person name="McLay K."/>
            <person name="Muzny D."/>
            <person name="Platzer M."/>
            <person name="Howell G.R."/>
            <person name="Burrows C."/>
            <person name="Bird C.P."/>
            <person name="Frankish A."/>
            <person name="Lovell F.L."/>
            <person name="Howe K.L."/>
            <person name="Ashurst J.L."/>
            <person name="Fulton R.S."/>
            <person name="Sudbrak R."/>
            <person name="Wen G."/>
            <person name="Jones M.C."/>
            <person name="Hurles M.E."/>
            <person name="Andrews T.D."/>
            <person name="Scott C.E."/>
            <person name="Searle S."/>
            <person name="Ramser J."/>
            <person name="Whittaker A."/>
            <person name="Deadman R."/>
            <person name="Carter N.P."/>
            <person name="Hunt S.E."/>
            <person name="Chen R."/>
            <person name="Cree A."/>
            <person name="Gunaratne P."/>
            <person name="Havlak P."/>
            <person name="Hodgson A."/>
            <person name="Metzker M.L."/>
            <person name="Richards S."/>
            <person name="Scott G."/>
            <person name="Steffen D."/>
            <person name="Sodergren E."/>
            <person name="Wheeler D.A."/>
            <person name="Worley K.C."/>
            <person name="Ainscough R."/>
            <person name="Ambrose K.D."/>
            <person name="Ansari-Lari M.A."/>
            <person name="Aradhya S."/>
            <person name="Ashwell R.I."/>
            <person name="Babbage A.K."/>
            <person name="Bagguley C.L."/>
            <person name="Ballabio A."/>
            <person name="Banerjee R."/>
            <person name="Barker G.E."/>
            <person name="Barlow K.F."/>
            <person name="Barrett I.P."/>
            <person name="Bates K.N."/>
            <person name="Beare D.M."/>
            <person name="Beasley H."/>
            <person name="Beasley O."/>
            <person name="Beck A."/>
            <person name="Bethel G."/>
            <person name="Blechschmidt K."/>
            <person name="Brady N."/>
            <person name="Bray-Allen S."/>
            <person name="Bridgeman A.M."/>
            <person name="Brown A.J."/>
            <person name="Brown M.J."/>
            <person name="Bonnin D."/>
            <person name="Bruford E.A."/>
            <person name="Buhay C."/>
            <person name="Burch P."/>
            <person name="Burford D."/>
            <person name="Burgess J."/>
            <person name="Burrill W."/>
            <person name="Burton J."/>
            <person name="Bye J.M."/>
            <person name="Carder C."/>
            <person name="Carrel L."/>
            <person name="Chako J."/>
            <person name="Chapman J.C."/>
            <person name="Chavez D."/>
            <person name="Chen E."/>
            <person name="Chen G."/>
            <person name="Chen Y."/>
            <person name="Chen Z."/>
            <person name="Chinault C."/>
            <person name="Ciccodicola A."/>
            <person name="Clark S.Y."/>
            <person name="Clarke G."/>
            <person name="Clee C.M."/>
            <person name="Clegg S."/>
            <person name="Clerc-Blankenburg K."/>
            <person name="Clifford K."/>
            <person name="Cobley V."/>
            <person name="Cole C.G."/>
            <person name="Conquer J.S."/>
            <person name="Corby N."/>
            <person name="Connor R.E."/>
            <person name="David R."/>
            <person name="Davies J."/>
            <person name="Davis C."/>
            <person name="Davis J."/>
            <person name="Delgado O."/>
            <person name="Deshazo D."/>
            <person name="Dhami P."/>
            <person name="Ding Y."/>
            <person name="Dinh H."/>
            <person name="Dodsworth S."/>
            <person name="Draper H."/>
            <person name="Dugan-Rocha S."/>
            <person name="Dunham A."/>
            <person name="Dunn M."/>
            <person name="Durbin K.J."/>
            <person name="Dutta I."/>
            <person name="Eades T."/>
            <person name="Ellwood M."/>
            <person name="Emery-Cohen A."/>
            <person name="Errington H."/>
            <person name="Evans K.L."/>
            <person name="Faulkner L."/>
            <person name="Francis F."/>
            <person name="Frankland J."/>
            <person name="Fraser A.E."/>
            <person name="Galgoczy P."/>
            <person name="Gilbert J."/>
            <person name="Gill R."/>
            <person name="Gloeckner G."/>
            <person name="Gregory S.G."/>
            <person name="Gribble S."/>
            <person name="Griffiths C."/>
            <person name="Grocock R."/>
            <person name="Gu Y."/>
            <person name="Gwilliam R."/>
            <person name="Hamilton C."/>
            <person name="Hart E.A."/>
            <person name="Hawes A."/>
            <person name="Heath P.D."/>
            <person name="Heitmann K."/>
            <person name="Hennig S."/>
            <person name="Hernandez J."/>
            <person name="Hinzmann B."/>
            <person name="Ho S."/>
            <person name="Hoffs M."/>
            <person name="Howden P.J."/>
            <person name="Huckle E.J."/>
            <person name="Hume J."/>
            <person name="Hunt P.J."/>
            <person name="Hunt A.R."/>
            <person name="Isherwood J."/>
            <person name="Jacob L."/>
            <person name="Johnson D."/>
            <person name="Jones S."/>
            <person name="de Jong P.J."/>
            <person name="Joseph S.S."/>
            <person name="Keenan S."/>
            <person name="Kelly S."/>
            <person name="Kershaw J.K."/>
            <person name="Khan Z."/>
            <person name="Kioschis P."/>
            <person name="Klages S."/>
            <person name="Knights A.J."/>
            <person name="Kosiura A."/>
            <person name="Kovar-Smith C."/>
            <person name="Laird G.K."/>
            <person name="Langford C."/>
            <person name="Lawlor S."/>
            <person name="Leversha M."/>
            <person name="Lewis L."/>
            <person name="Liu W."/>
            <person name="Lloyd C."/>
            <person name="Lloyd D.M."/>
            <person name="Loulseged H."/>
            <person name="Loveland J.E."/>
            <person name="Lovell J.D."/>
            <person name="Lozado R."/>
            <person name="Lu J."/>
            <person name="Lyne R."/>
            <person name="Ma J."/>
            <person name="Maheshwari M."/>
            <person name="Matthews L.H."/>
            <person name="McDowall J."/>
            <person name="McLaren S."/>
            <person name="McMurray A."/>
            <person name="Meidl P."/>
            <person name="Meitinger T."/>
            <person name="Milne S."/>
            <person name="Miner G."/>
            <person name="Mistry S.L."/>
            <person name="Morgan M."/>
            <person name="Morris S."/>
            <person name="Mueller I."/>
            <person name="Mullikin J.C."/>
            <person name="Nguyen N."/>
            <person name="Nordsiek G."/>
            <person name="Nyakatura G."/>
            <person name="O'dell C.N."/>
            <person name="Okwuonu G."/>
            <person name="Palmer S."/>
            <person name="Pandian R."/>
            <person name="Parker D."/>
            <person name="Parrish J."/>
            <person name="Pasternak S."/>
            <person name="Patel D."/>
            <person name="Pearce A.V."/>
            <person name="Pearson D.M."/>
            <person name="Pelan S.E."/>
            <person name="Perez L."/>
            <person name="Porter K.M."/>
            <person name="Ramsey Y."/>
            <person name="Reichwald K."/>
            <person name="Rhodes S."/>
            <person name="Ridler K.A."/>
            <person name="Schlessinger D."/>
            <person name="Schueler M.G."/>
            <person name="Sehra H.K."/>
            <person name="Shaw-Smith C."/>
            <person name="Shen H."/>
            <person name="Sheridan E.M."/>
            <person name="Shownkeen R."/>
            <person name="Skuce C.D."/>
            <person name="Smith M.L."/>
            <person name="Sotheran E.C."/>
            <person name="Steingruber H.E."/>
            <person name="Steward C.A."/>
            <person name="Storey R."/>
            <person name="Swann R.M."/>
            <person name="Swarbreck D."/>
            <person name="Tabor P.E."/>
            <person name="Taudien S."/>
            <person name="Taylor T."/>
            <person name="Teague B."/>
            <person name="Thomas K."/>
            <person name="Thorpe A."/>
            <person name="Timms K."/>
            <person name="Tracey A."/>
            <person name="Trevanion S."/>
            <person name="Tromans A.C."/>
            <person name="d'Urso M."/>
            <person name="Verduzco D."/>
            <person name="Villasana D."/>
            <person name="Waldron L."/>
            <person name="Wall M."/>
            <person name="Wang Q."/>
            <person name="Warren J."/>
            <person name="Warry G.L."/>
            <person name="Wei X."/>
            <person name="West A."/>
            <person name="Whitehead S.L."/>
            <person name="Whiteley M.N."/>
            <person name="Wilkinson J.E."/>
            <person name="Willey D.L."/>
            <person name="Williams G."/>
            <person name="Williams L."/>
            <person name="Williamson A."/>
            <person name="Williamson H."/>
            <person name="Wilming L."/>
            <person name="Woodmansey R.L."/>
            <person name="Wray P.W."/>
            <person name="Yen J."/>
            <person name="Zhang J."/>
            <person name="Zhou J."/>
            <person name="Zoghbi H."/>
            <person name="Zorilla S."/>
            <person name="Buck D."/>
            <person name="Reinhardt R."/>
            <person name="Poustka A."/>
            <person name="Rosenthal A."/>
            <person name="Lehrach H."/>
            <person name="Meindl A."/>
            <person name="Minx P.J."/>
            <person name="Hillier L.W."/>
            <person name="Willard H.F."/>
            <person name="Wilson R.K."/>
            <person name="Waterston R.H."/>
            <person name="Rice C.M."/>
            <person name="Vaudin M."/>
            <person name="Coulson A."/>
            <person name="Nelson D.L."/>
            <person name="Weinstock G."/>
            <person name="Sulston J.E."/>
            <person name="Durbin R.M."/>
            <person name="Hubbard T."/>
            <person name="Gibbs R.A."/>
            <person name="Beck S."/>
            <person name="Rogers J."/>
            <person name="Bentley D.R."/>
        </authorList>
    </citation>
    <scope>NUCLEOTIDE SEQUENCE [LARGE SCALE GENOMIC DNA]</scope>
</reference>
<keyword id="KW-1185">Reference proteome</keyword>
<dbReference type="EMBL" id="AC240504">
    <property type="status" value="NOT_ANNOTATED_CDS"/>
    <property type="molecule type" value="Genomic_DNA"/>
</dbReference>
<dbReference type="CCDS" id="CCDS87762.1"/>
<dbReference type="RefSeq" id="NP_001335132.1">
    <property type="nucleotide sequence ID" value="NM_001348203.1"/>
</dbReference>
<dbReference type="BioMuta" id="FAM236D"/>
<dbReference type="MassIVE" id="A0A1B0GTK5"/>
<dbReference type="DNASU" id="105373251"/>
<dbReference type="Ensembl" id="ENST00000419795.6">
    <property type="protein sequence ID" value="ENSP00000489739.1"/>
    <property type="gene ID" value="ENSG00000225396.6"/>
</dbReference>
<dbReference type="GeneID" id="105373251"/>
<dbReference type="KEGG" id="hsa:105373251"/>
<dbReference type="MANE-Select" id="ENST00000419795.6">
    <property type="protein sequence ID" value="ENSP00000489739.1"/>
    <property type="RefSeq nucleotide sequence ID" value="NM_001348203.1"/>
    <property type="RefSeq protein sequence ID" value="NP_001335132.1"/>
</dbReference>
<dbReference type="AGR" id="HGNC:52641"/>
<dbReference type="AGR" id="HGNC:52642"/>
<dbReference type="CTD" id="105373251"/>
<dbReference type="GeneCards" id="FAM236D"/>
<dbReference type="HGNC" id="HGNC:52642">
    <property type="gene designation" value="FAM236D"/>
</dbReference>
<dbReference type="HPA" id="ENSG00000225396">
    <property type="expression patterns" value="Tissue enriched (testis)"/>
</dbReference>
<dbReference type="neXtProt" id="NX_A0A1B0GTK5"/>
<dbReference type="VEuPathDB" id="HostDB:ENSG00000225396"/>
<dbReference type="InParanoid" id="A0A1B0GTK5"/>
<dbReference type="OrthoDB" id="9538021at2759"/>
<dbReference type="PAN-GO" id="A0A1B0GTK5">
    <property type="GO annotations" value="0 GO annotations based on evolutionary models"/>
</dbReference>
<dbReference type="BioGRID-ORCS" id="105373251">
    <property type="hits" value="0 hits in 1 CRISPR screen"/>
</dbReference>
<dbReference type="Pharos" id="A0A1B0GTK5">
    <property type="development level" value="Tdark"/>
</dbReference>
<dbReference type="PRO" id="PR:A0A1B0GTK5"/>
<dbReference type="Proteomes" id="UP000005640">
    <property type="component" value="Chromosome X"/>
</dbReference>
<dbReference type="RNAct" id="A0A1B0GTK5">
    <property type="molecule type" value="protein"/>
</dbReference>
<dbReference type="Bgee" id="ENSG00000225396">
    <property type="expression patterns" value="Expressed in male germ line stem cell (sensu Vertebrata) in testis and 27 other cell types or tissues"/>
</dbReference>
<dbReference type="ExpressionAtlas" id="A0A1B0GTK5">
    <property type="expression patterns" value="baseline"/>
</dbReference>
<protein>
    <recommendedName>
        <fullName evidence="2">Protein FAM236D</fullName>
    </recommendedName>
</protein>
<proteinExistence type="inferred from homology"/>
<name>F236D_HUMAN</name>
<comment type="similarity">
    <text evidence="2">Belongs to the FAM236 family.</text>
</comment>
<gene>
    <name evidence="3" type="primary">FAM236D</name>
</gene>
<feature type="chain" id="PRO_0000440653" description="Protein FAM236D">
    <location>
        <begin position="1"/>
        <end position="79"/>
    </location>
</feature>
<feature type="region of interest" description="Disordered" evidence="1">
    <location>
        <begin position="19"/>
        <end position="48"/>
    </location>
</feature>
<evidence type="ECO:0000256" key="1">
    <source>
        <dbReference type="SAM" id="MobiDB-lite"/>
    </source>
</evidence>
<evidence type="ECO:0000305" key="2"/>
<evidence type="ECO:0000312" key="3">
    <source>
        <dbReference type="HGNC" id="HGNC:52642"/>
    </source>
</evidence>